<proteinExistence type="inferred from homology"/>
<reference key="1">
    <citation type="journal article" date="2004" name="J. Mol. Evol.">
        <title>Comparative analysis of the complete plastid genome sequence of the red alga Gracilaria tenuistipitata var. liui provides insights into the evolution of rhodoplasts and their relationship to other plastids.</title>
        <authorList>
            <person name="Hagopian J.C."/>
            <person name="Reis M."/>
            <person name="Kitajima J.P."/>
            <person name="Bhattacharya D."/>
            <person name="de Oliveira M.C."/>
        </authorList>
    </citation>
    <scope>NUCLEOTIDE SEQUENCE [LARGE SCALE GENOMIC DNA]</scope>
</reference>
<organism>
    <name type="scientific">Gracilaria tenuistipitata var. liui</name>
    <name type="common">Red alga</name>
    <dbReference type="NCBI Taxonomy" id="285951"/>
    <lineage>
        <taxon>Eukaryota</taxon>
        <taxon>Rhodophyta</taxon>
        <taxon>Florideophyceae</taxon>
        <taxon>Rhodymeniophycidae</taxon>
        <taxon>Gracilariales</taxon>
        <taxon>Gracilariaceae</taxon>
        <taxon>Gracilaria</taxon>
        <taxon>Gracilaria tenuistipitata</taxon>
    </lineage>
</organism>
<accession>Q6B8U8</accession>
<geneLocation type="chloroplast"/>
<feature type="chain" id="PRO_0000276712" description="Small ribosomal subunit protein uS14c">
    <location>
        <begin position="1"/>
        <end position="100"/>
    </location>
</feature>
<dbReference type="EMBL" id="AY673996">
    <property type="protein sequence ID" value="AAT79687.1"/>
    <property type="molecule type" value="Genomic_DNA"/>
</dbReference>
<dbReference type="RefSeq" id="YP_063612.1">
    <property type="nucleotide sequence ID" value="NC_006137.1"/>
</dbReference>
<dbReference type="SMR" id="Q6B8U8"/>
<dbReference type="GeneID" id="2943942"/>
<dbReference type="GO" id="GO:0009507">
    <property type="term" value="C:chloroplast"/>
    <property type="evidence" value="ECO:0007669"/>
    <property type="project" value="UniProtKB-SubCell"/>
</dbReference>
<dbReference type="GO" id="GO:0015935">
    <property type="term" value="C:small ribosomal subunit"/>
    <property type="evidence" value="ECO:0007669"/>
    <property type="project" value="TreeGrafter"/>
</dbReference>
<dbReference type="GO" id="GO:0019843">
    <property type="term" value="F:rRNA binding"/>
    <property type="evidence" value="ECO:0007669"/>
    <property type="project" value="UniProtKB-UniRule"/>
</dbReference>
<dbReference type="GO" id="GO:0003735">
    <property type="term" value="F:structural constituent of ribosome"/>
    <property type="evidence" value="ECO:0007669"/>
    <property type="project" value="InterPro"/>
</dbReference>
<dbReference type="GO" id="GO:0006412">
    <property type="term" value="P:translation"/>
    <property type="evidence" value="ECO:0007669"/>
    <property type="project" value="UniProtKB-UniRule"/>
</dbReference>
<dbReference type="FunFam" id="1.10.287.1480:FF:000001">
    <property type="entry name" value="30S ribosomal protein S14"/>
    <property type="match status" value="1"/>
</dbReference>
<dbReference type="Gene3D" id="1.10.287.1480">
    <property type="match status" value="1"/>
</dbReference>
<dbReference type="HAMAP" id="MF_00537">
    <property type="entry name" value="Ribosomal_uS14_1"/>
    <property type="match status" value="1"/>
</dbReference>
<dbReference type="InterPro" id="IPR001209">
    <property type="entry name" value="Ribosomal_uS14"/>
</dbReference>
<dbReference type="InterPro" id="IPR023036">
    <property type="entry name" value="Ribosomal_uS14_bac/plastid"/>
</dbReference>
<dbReference type="InterPro" id="IPR018271">
    <property type="entry name" value="Ribosomal_uS14_CS"/>
</dbReference>
<dbReference type="NCBIfam" id="NF006477">
    <property type="entry name" value="PRK08881.1"/>
    <property type="match status" value="1"/>
</dbReference>
<dbReference type="PANTHER" id="PTHR19836">
    <property type="entry name" value="30S RIBOSOMAL PROTEIN S14"/>
    <property type="match status" value="1"/>
</dbReference>
<dbReference type="PANTHER" id="PTHR19836:SF19">
    <property type="entry name" value="SMALL RIBOSOMAL SUBUNIT PROTEIN US14M"/>
    <property type="match status" value="1"/>
</dbReference>
<dbReference type="Pfam" id="PF00253">
    <property type="entry name" value="Ribosomal_S14"/>
    <property type="match status" value="1"/>
</dbReference>
<dbReference type="SUPFAM" id="SSF57716">
    <property type="entry name" value="Glucocorticoid receptor-like (DNA-binding domain)"/>
    <property type="match status" value="1"/>
</dbReference>
<dbReference type="PROSITE" id="PS00527">
    <property type="entry name" value="RIBOSOMAL_S14"/>
    <property type="match status" value="1"/>
</dbReference>
<sequence length="100" mass="12178">MAKQNMIEREKKRNKLIQKYYRKRKEIKGTLNNNLTFIEQLEIQRELQKLPKNSTPCRRRNRCWKTGRSRGFYKDFGLSRHVLREMSHNCLLPGVRKASW</sequence>
<name>RR14_GRATL</name>
<keyword id="KW-0150">Chloroplast</keyword>
<keyword id="KW-0934">Plastid</keyword>
<keyword id="KW-0687">Ribonucleoprotein</keyword>
<keyword id="KW-0689">Ribosomal protein</keyword>
<keyword id="KW-0694">RNA-binding</keyword>
<keyword id="KW-0699">rRNA-binding</keyword>
<gene>
    <name evidence="1" type="primary">rps14</name>
    <name type="ordered locus">Grc000106</name>
</gene>
<comment type="function">
    <text evidence="1">Binds 16S rRNA, required for the assembly of 30S particles.</text>
</comment>
<comment type="subunit">
    <text evidence="1">Part of the 30S ribosomal subunit.</text>
</comment>
<comment type="subcellular location">
    <subcellularLocation>
        <location>Plastid</location>
        <location>Chloroplast</location>
    </subcellularLocation>
</comment>
<comment type="similarity">
    <text evidence="1">Belongs to the universal ribosomal protein uS14 family.</text>
</comment>
<protein>
    <recommendedName>
        <fullName evidence="1">Small ribosomal subunit protein uS14c</fullName>
    </recommendedName>
    <alternativeName>
        <fullName evidence="2">30S ribosomal protein S14, chloroplastic</fullName>
    </alternativeName>
</protein>
<evidence type="ECO:0000255" key="1">
    <source>
        <dbReference type="HAMAP-Rule" id="MF_00537"/>
    </source>
</evidence>
<evidence type="ECO:0000305" key="2"/>